<sequence>MARIAGVNIPVHKHTVIGLTSIYGIGKTRAQQICQTCNVDPTVKIKDLSEEQVESLRTEVAKFTVEGDLRREVSMDIKRLMDLGCFRGRRHRRSLPVRGQRTKTNARTRKGPRKPIKA</sequence>
<protein>
    <recommendedName>
        <fullName evidence="1">Small ribosomal subunit protein uS13</fullName>
    </recommendedName>
    <alternativeName>
        <fullName evidence="3">30S ribosomal protein S13</fullName>
    </alternativeName>
</protein>
<feature type="chain" id="PRO_0000306606" description="Small ribosomal subunit protein uS13">
    <location>
        <begin position="1"/>
        <end position="118"/>
    </location>
</feature>
<feature type="region of interest" description="Disordered" evidence="2">
    <location>
        <begin position="91"/>
        <end position="118"/>
    </location>
</feature>
<comment type="function">
    <text evidence="1">Located at the top of the head of the 30S subunit, it contacts several helices of the 16S rRNA. In the 70S ribosome it contacts the 23S rRNA (bridge B1a) and protein L5 of the 50S subunit (bridge B1b), connecting the 2 subunits; these bridges are implicated in subunit movement. Contacts the tRNAs in the A and P-sites.</text>
</comment>
<comment type="subunit">
    <text evidence="1">Part of the 30S ribosomal subunit. Forms a loose heterodimer with protein S19. Forms two bridges to the 50S subunit in the 70S ribosome.</text>
</comment>
<comment type="similarity">
    <text evidence="1">Belongs to the universal ribosomal protein uS13 family.</text>
</comment>
<keyword id="KW-0687">Ribonucleoprotein</keyword>
<keyword id="KW-0689">Ribosomal protein</keyword>
<keyword id="KW-0694">RNA-binding</keyword>
<keyword id="KW-0699">rRNA-binding</keyword>
<keyword id="KW-0820">tRNA-binding</keyword>
<reference key="1">
    <citation type="journal article" date="2007" name="Genome Biol.">
        <title>Comparison of Francisella tularensis genomes reveals evolutionary events associated with the emergence of human pathogenic strains.</title>
        <authorList>
            <person name="Rohmer L."/>
            <person name="Fong C."/>
            <person name="Abmayr S."/>
            <person name="Wasnick M."/>
            <person name="Larson Freeman T.J."/>
            <person name="Radey M."/>
            <person name="Guina T."/>
            <person name="Svensson K."/>
            <person name="Hayden H.S."/>
            <person name="Jacobs M."/>
            <person name="Gallagher L.A."/>
            <person name="Manoil C."/>
            <person name="Ernst R.K."/>
            <person name="Drees B."/>
            <person name="Buckley D."/>
            <person name="Haugen E."/>
            <person name="Bovee D."/>
            <person name="Zhou Y."/>
            <person name="Chang J."/>
            <person name="Levy R."/>
            <person name="Lim R."/>
            <person name="Gillett W."/>
            <person name="Guenthener D."/>
            <person name="Kang A."/>
            <person name="Shaffer S.A."/>
            <person name="Taylor G."/>
            <person name="Chen J."/>
            <person name="Gallis B."/>
            <person name="D'Argenio D.A."/>
            <person name="Forsman M."/>
            <person name="Olson M.V."/>
            <person name="Goodlett D.R."/>
            <person name="Kaul R."/>
            <person name="Miller S.I."/>
            <person name="Brittnacher M.J."/>
        </authorList>
    </citation>
    <scope>NUCLEOTIDE SEQUENCE [LARGE SCALE GENOMIC DNA]</scope>
    <source>
        <strain>U112</strain>
    </source>
</reference>
<name>RS13_FRATN</name>
<evidence type="ECO:0000255" key="1">
    <source>
        <dbReference type="HAMAP-Rule" id="MF_01315"/>
    </source>
</evidence>
<evidence type="ECO:0000256" key="2">
    <source>
        <dbReference type="SAM" id="MobiDB-lite"/>
    </source>
</evidence>
<evidence type="ECO:0000305" key="3"/>
<proteinExistence type="inferred from homology"/>
<gene>
    <name evidence="1" type="primary">rpsM</name>
    <name type="ordered locus">FTN_0261</name>
</gene>
<dbReference type="EMBL" id="CP000439">
    <property type="protein sequence ID" value="ABK89170.1"/>
    <property type="molecule type" value="Genomic_DNA"/>
</dbReference>
<dbReference type="RefSeq" id="WP_003014373.1">
    <property type="nucleotide sequence ID" value="NZ_CP009633.1"/>
</dbReference>
<dbReference type="SMR" id="A0Q4K5"/>
<dbReference type="GeneID" id="75264239"/>
<dbReference type="KEGG" id="ftn:FTN_0261"/>
<dbReference type="KEGG" id="ftx:AW25_1781"/>
<dbReference type="BioCyc" id="FTUL401614:G1G75-272-MONOMER"/>
<dbReference type="Proteomes" id="UP000000762">
    <property type="component" value="Chromosome"/>
</dbReference>
<dbReference type="GO" id="GO:0005829">
    <property type="term" value="C:cytosol"/>
    <property type="evidence" value="ECO:0007669"/>
    <property type="project" value="TreeGrafter"/>
</dbReference>
<dbReference type="GO" id="GO:0015935">
    <property type="term" value="C:small ribosomal subunit"/>
    <property type="evidence" value="ECO:0007669"/>
    <property type="project" value="TreeGrafter"/>
</dbReference>
<dbReference type="GO" id="GO:0019843">
    <property type="term" value="F:rRNA binding"/>
    <property type="evidence" value="ECO:0007669"/>
    <property type="project" value="UniProtKB-UniRule"/>
</dbReference>
<dbReference type="GO" id="GO:0003735">
    <property type="term" value="F:structural constituent of ribosome"/>
    <property type="evidence" value="ECO:0007669"/>
    <property type="project" value="InterPro"/>
</dbReference>
<dbReference type="GO" id="GO:0000049">
    <property type="term" value="F:tRNA binding"/>
    <property type="evidence" value="ECO:0007669"/>
    <property type="project" value="UniProtKB-UniRule"/>
</dbReference>
<dbReference type="GO" id="GO:0006412">
    <property type="term" value="P:translation"/>
    <property type="evidence" value="ECO:0007669"/>
    <property type="project" value="UniProtKB-UniRule"/>
</dbReference>
<dbReference type="FunFam" id="1.10.8.50:FF:000001">
    <property type="entry name" value="30S ribosomal protein S13"/>
    <property type="match status" value="1"/>
</dbReference>
<dbReference type="FunFam" id="4.10.910.10:FF:000001">
    <property type="entry name" value="30S ribosomal protein S13"/>
    <property type="match status" value="1"/>
</dbReference>
<dbReference type="Gene3D" id="1.10.8.50">
    <property type="match status" value="1"/>
</dbReference>
<dbReference type="Gene3D" id="4.10.910.10">
    <property type="entry name" value="30s ribosomal protein s13, domain 2"/>
    <property type="match status" value="1"/>
</dbReference>
<dbReference type="HAMAP" id="MF_01315">
    <property type="entry name" value="Ribosomal_uS13"/>
    <property type="match status" value="1"/>
</dbReference>
<dbReference type="InterPro" id="IPR027437">
    <property type="entry name" value="Rbsml_uS13_C"/>
</dbReference>
<dbReference type="InterPro" id="IPR001892">
    <property type="entry name" value="Ribosomal_uS13"/>
</dbReference>
<dbReference type="InterPro" id="IPR010979">
    <property type="entry name" value="Ribosomal_uS13-like_H2TH"/>
</dbReference>
<dbReference type="InterPro" id="IPR019980">
    <property type="entry name" value="Ribosomal_uS13_bac-type"/>
</dbReference>
<dbReference type="InterPro" id="IPR018269">
    <property type="entry name" value="Ribosomal_uS13_CS"/>
</dbReference>
<dbReference type="NCBIfam" id="TIGR03631">
    <property type="entry name" value="uS13_bact"/>
    <property type="match status" value="1"/>
</dbReference>
<dbReference type="PANTHER" id="PTHR10871">
    <property type="entry name" value="30S RIBOSOMAL PROTEIN S13/40S RIBOSOMAL PROTEIN S18"/>
    <property type="match status" value="1"/>
</dbReference>
<dbReference type="PANTHER" id="PTHR10871:SF1">
    <property type="entry name" value="SMALL RIBOSOMAL SUBUNIT PROTEIN US13M"/>
    <property type="match status" value="1"/>
</dbReference>
<dbReference type="Pfam" id="PF00416">
    <property type="entry name" value="Ribosomal_S13"/>
    <property type="match status" value="1"/>
</dbReference>
<dbReference type="PIRSF" id="PIRSF002134">
    <property type="entry name" value="Ribosomal_S13"/>
    <property type="match status" value="1"/>
</dbReference>
<dbReference type="SUPFAM" id="SSF46946">
    <property type="entry name" value="S13-like H2TH domain"/>
    <property type="match status" value="1"/>
</dbReference>
<dbReference type="PROSITE" id="PS00646">
    <property type="entry name" value="RIBOSOMAL_S13_1"/>
    <property type="match status" value="1"/>
</dbReference>
<dbReference type="PROSITE" id="PS50159">
    <property type="entry name" value="RIBOSOMAL_S13_2"/>
    <property type="match status" value="1"/>
</dbReference>
<organism>
    <name type="scientific">Francisella tularensis subsp. novicida (strain U112)</name>
    <dbReference type="NCBI Taxonomy" id="401614"/>
    <lineage>
        <taxon>Bacteria</taxon>
        <taxon>Pseudomonadati</taxon>
        <taxon>Pseudomonadota</taxon>
        <taxon>Gammaproteobacteria</taxon>
        <taxon>Thiotrichales</taxon>
        <taxon>Francisellaceae</taxon>
        <taxon>Francisella</taxon>
    </lineage>
</organism>
<accession>A0Q4K5</accession>